<accession>Q9UN88</accession>
<accession>A6NFN1</accession>
<accession>Q32MB4</accession>
<accession>Q9NZK8</accession>
<feature type="signal peptide" evidence="4">
    <location>
        <begin position="1"/>
        <end position="21"/>
    </location>
</feature>
<feature type="chain" id="PRO_0000460469" description="Gamma-aminobutyric acid receptor subunit theta" evidence="4">
    <location>
        <begin position="22"/>
        <end position="632"/>
    </location>
</feature>
<feature type="topological domain" description="Extracellular" evidence="11">
    <location>
        <begin position="22"/>
        <end position="268"/>
    </location>
</feature>
<feature type="transmembrane region" description="Helical" evidence="4">
    <location>
        <begin position="269"/>
        <end position="289"/>
    </location>
</feature>
<feature type="topological domain" description="Cytoplasmic" evidence="11">
    <location>
        <begin position="290"/>
        <end position="297"/>
    </location>
</feature>
<feature type="transmembrane region" description="Helical" evidence="4">
    <location>
        <begin position="298"/>
        <end position="315"/>
    </location>
</feature>
<feature type="topological domain" description="Extracellular" evidence="11">
    <location>
        <begin position="316"/>
        <end position="326"/>
    </location>
</feature>
<feature type="transmembrane region" description="Helical" evidence="4">
    <location>
        <begin position="327"/>
        <end position="347"/>
    </location>
</feature>
<feature type="topological domain" description="Cytoplasmic" evidence="11">
    <location>
        <begin position="348"/>
        <end position="611"/>
    </location>
</feature>
<feature type="transmembrane region" description="Helical" evidence="4">
    <location>
        <begin position="612"/>
        <end position="632"/>
    </location>
</feature>
<feature type="region of interest" description="Disordered" evidence="5">
    <location>
        <begin position="410"/>
        <end position="458"/>
    </location>
</feature>
<feature type="region of interest" description="Disordered" evidence="5">
    <location>
        <begin position="491"/>
        <end position="523"/>
    </location>
</feature>
<feature type="compositionally biased region" description="Polar residues" evidence="5">
    <location>
        <begin position="413"/>
        <end position="425"/>
    </location>
</feature>
<feature type="compositionally biased region" description="Low complexity" evidence="5">
    <location>
        <begin position="426"/>
        <end position="439"/>
    </location>
</feature>
<feature type="compositionally biased region" description="Polar residues" evidence="5">
    <location>
        <begin position="448"/>
        <end position="458"/>
    </location>
</feature>
<feature type="compositionally biased region" description="Basic and acidic residues" evidence="5">
    <location>
        <begin position="491"/>
        <end position="511"/>
    </location>
</feature>
<feature type="glycosylation site" description="N-linked (GlcNAc...) asparagine" evidence="4">
    <location>
        <position position="127"/>
    </location>
</feature>
<feature type="disulfide bond" evidence="2">
    <location>
        <begin position="183"/>
        <end position="197"/>
    </location>
</feature>
<feature type="sequence variant" id="VAR_030761" description="In dbSNP:rs4996045.">
    <original>L</original>
    <variation>I</variation>
    <location>
        <position position="15"/>
    </location>
</feature>
<feature type="sequence variant" id="VAR_030762" description="In dbSNP:rs3810651." evidence="6 9">
    <original>I</original>
    <variation>F</variation>
    <location>
        <position position="478"/>
    </location>
</feature>
<dbReference type="EMBL" id="AF189259">
    <property type="protein sequence ID" value="AAF70380.1"/>
    <property type="molecule type" value="mRNA"/>
</dbReference>
<dbReference type="EMBL" id="AF002997">
    <property type="status" value="NOT_ANNOTATED_CDS"/>
    <property type="molecule type" value="Genomic_DNA"/>
</dbReference>
<dbReference type="EMBL" id="CH471169">
    <property type="protein sequence ID" value="EAW99424.1"/>
    <property type="molecule type" value="Genomic_DNA"/>
</dbReference>
<dbReference type="EMBL" id="BC109210">
    <property type="protein sequence ID" value="AAI09211.1"/>
    <property type="molecule type" value="mRNA"/>
</dbReference>
<dbReference type="EMBL" id="BC109211">
    <property type="protein sequence ID" value="AAI09212.1"/>
    <property type="molecule type" value="mRNA"/>
</dbReference>
<dbReference type="EMBL" id="AF144648">
    <property type="protein sequence ID" value="AAD51172.1"/>
    <property type="molecule type" value="mRNA"/>
</dbReference>
<dbReference type="CCDS" id="CCDS14707.1"/>
<dbReference type="RefSeq" id="NP_061028.3">
    <property type="nucleotide sequence ID" value="NM_018558.4"/>
</dbReference>
<dbReference type="SMR" id="Q9UN88"/>
<dbReference type="BioGRID" id="120973">
    <property type="interactions" value="9"/>
</dbReference>
<dbReference type="ComplexPortal" id="CPX-8573">
    <property type="entry name" value="GABA-A receptor, alpha3-beta3-theta"/>
</dbReference>
<dbReference type="CORUM" id="Q9UN88"/>
<dbReference type="FunCoup" id="Q9UN88">
    <property type="interactions" value="520"/>
</dbReference>
<dbReference type="IntAct" id="Q9UN88">
    <property type="interactions" value="4"/>
</dbReference>
<dbReference type="STRING" id="9606.ENSP00000469332"/>
<dbReference type="ChEMBL" id="CHEMBL3885575"/>
<dbReference type="DrugBank" id="DB12537">
    <property type="generic name" value="1,2-Benzodiazepine"/>
</dbReference>
<dbReference type="DrugBank" id="DB00546">
    <property type="generic name" value="Adinazolam"/>
</dbReference>
<dbReference type="DrugBank" id="DB00404">
    <property type="generic name" value="Alprazolam"/>
</dbReference>
<dbReference type="DrugBank" id="DB00543">
    <property type="generic name" value="Amoxapine"/>
</dbReference>
<dbReference type="DrugBank" id="DB11901">
    <property type="generic name" value="Apalutamide"/>
</dbReference>
<dbReference type="DrugBank" id="DB14719">
    <property type="generic name" value="Bentazepam"/>
</dbReference>
<dbReference type="DrugBank" id="DB11859">
    <property type="generic name" value="Brexanolone"/>
</dbReference>
<dbReference type="DrugBank" id="DB01558">
    <property type="generic name" value="Bromazepam"/>
</dbReference>
<dbReference type="DrugBank" id="DB09017">
    <property type="generic name" value="Brotizolam"/>
</dbReference>
<dbReference type="DrugBank" id="DB00237">
    <property type="generic name" value="Butabarbital"/>
</dbReference>
<dbReference type="DrugBank" id="DB00241">
    <property type="generic name" value="Butalbital"/>
</dbReference>
<dbReference type="DrugBank" id="DB01489">
    <property type="generic name" value="Camazepam"/>
</dbReference>
<dbReference type="DrugBank" id="DB00475">
    <property type="generic name" value="Chlordiazepoxide"/>
</dbReference>
<dbReference type="DrugBank" id="DB14715">
    <property type="generic name" value="Cinazepam"/>
</dbReference>
<dbReference type="DrugBank" id="DB01594">
    <property type="generic name" value="Cinolazepam"/>
</dbReference>
<dbReference type="DrugBank" id="DB00349">
    <property type="generic name" value="Clobazam"/>
</dbReference>
<dbReference type="DrugBank" id="DB01068">
    <property type="generic name" value="Clonazepam"/>
</dbReference>
<dbReference type="DrugBank" id="DB00628">
    <property type="generic name" value="Clorazepic acid"/>
</dbReference>
<dbReference type="DrugBank" id="DB01559">
    <property type="generic name" value="Clotiazepam"/>
</dbReference>
<dbReference type="DrugBank" id="DB01553">
    <property type="generic name" value="Cloxazolam"/>
</dbReference>
<dbReference type="DrugBank" id="DB01511">
    <property type="generic name" value="Delorazepam"/>
</dbReference>
<dbReference type="DrugBank" id="DB01189">
    <property type="generic name" value="Desflurane"/>
</dbReference>
<dbReference type="DrugBank" id="DB00829">
    <property type="generic name" value="Diazepam"/>
</dbReference>
<dbReference type="DrugBank" id="DB13837">
    <property type="generic name" value="Doxefazepam"/>
</dbReference>
<dbReference type="DrugBank" id="DB00228">
    <property type="generic name" value="Enflurane"/>
</dbReference>
<dbReference type="DrugBank" id="DB01215">
    <property type="generic name" value="Estazolam"/>
</dbReference>
<dbReference type="DrugBank" id="DB00402">
    <property type="generic name" value="Eszopiclone"/>
</dbReference>
<dbReference type="DrugBank" id="DB00898">
    <property type="generic name" value="Ethanol"/>
</dbReference>
<dbReference type="DrugBank" id="DB00189">
    <property type="generic name" value="Ethchlorvynol"/>
</dbReference>
<dbReference type="DrugBank" id="DB01545">
    <property type="generic name" value="Ethyl loflazepate"/>
</dbReference>
<dbReference type="DrugBank" id="DB09166">
    <property type="generic name" value="Etizolam"/>
</dbReference>
<dbReference type="DrugBank" id="DB00292">
    <property type="generic name" value="Etomidate"/>
</dbReference>
<dbReference type="DrugBank" id="DB01205">
    <property type="generic name" value="Flumazenil"/>
</dbReference>
<dbReference type="DrugBank" id="DB01544">
    <property type="generic name" value="Flunitrazepam"/>
</dbReference>
<dbReference type="DrugBank" id="DB00690">
    <property type="generic name" value="Flurazepam"/>
</dbReference>
<dbReference type="DrugBank" id="DB05087">
    <property type="generic name" value="Ganaxolone"/>
</dbReference>
<dbReference type="DrugBank" id="DB01437">
    <property type="generic name" value="Glutethimide"/>
</dbReference>
<dbReference type="DrugBank" id="DB00801">
    <property type="generic name" value="Halazepam"/>
</dbReference>
<dbReference type="DrugBank" id="DB01159">
    <property type="generic name" value="Halothane"/>
</dbReference>
<dbReference type="DrugBank" id="DB00753">
    <property type="generic name" value="Isoflurane"/>
</dbReference>
<dbReference type="DrugBank" id="DB01587">
    <property type="generic name" value="Ketazolam"/>
</dbReference>
<dbReference type="DrugBank" id="DB00555">
    <property type="generic name" value="Lamotrigine"/>
</dbReference>
<dbReference type="DrugBank" id="DB13643">
    <property type="generic name" value="Loprazolam"/>
</dbReference>
<dbReference type="DrugBank" id="DB00186">
    <property type="generic name" value="Lorazepam"/>
</dbReference>
<dbReference type="DrugBank" id="DB13872">
    <property type="generic name" value="Lormetazepam"/>
</dbReference>
<dbReference type="DrugBank" id="DB13437">
    <property type="generic name" value="Medazepam"/>
</dbReference>
<dbReference type="DrugBank" id="DB00603">
    <property type="generic name" value="Medroxyprogesterone acetate"/>
</dbReference>
<dbReference type="DrugBank" id="DB01043">
    <property type="generic name" value="Memantine"/>
</dbReference>
<dbReference type="DrugBank" id="DB00371">
    <property type="generic name" value="Meprobamate"/>
</dbReference>
<dbReference type="DrugBank" id="DB00463">
    <property type="generic name" value="Metharbital"/>
</dbReference>
<dbReference type="DrugBank" id="DB01028">
    <property type="generic name" value="Methoxyflurane"/>
</dbReference>
<dbReference type="DrugBank" id="DB01107">
    <property type="generic name" value="Methyprylon"/>
</dbReference>
<dbReference type="DrugBank" id="DB15489">
    <property type="generic name" value="Mexazolam"/>
</dbReference>
<dbReference type="DrugBank" id="DB00683">
    <property type="generic name" value="Midazolam"/>
</dbReference>
<dbReference type="DrugBank" id="DB01595">
    <property type="generic name" value="Nitrazepam"/>
</dbReference>
<dbReference type="DrugBank" id="DB14028">
    <property type="generic name" value="Nordazepam"/>
</dbReference>
<dbReference type="DrugBank" id="DB00842">
    <property type="generic name" value="Oxazepam"/>
</dbReference>
<dbReference type="DrugBank" id="DB14672">
    <property type="generic name" value="Oxazepam acetate"/>
</dbReference>
<dbReference type="DrugBank" id="DB00312">
    <property type="generic name" value="Pentobarbital"/>
</dbReference>
<dbReference type="DrugBank" id="DB00252">
    <property type="generic name" value="Phenytoin"/>
</dbReference>
<dbReference type="DrugBank" id="DB13335">
    <property type="generic name" value="Pinazepam"/>
</dbReference>
<dbReference type="DrugBank" id="DB01708">
    <property type="generic name" value="Prasterone"/>
</dbReference>
<dbReference type="DrugBank" id="DB01588">
    <property type="generic name" value="Prazepam"/>
</dbReference>
<dbReference type="DrugBank" id="DB00794">
    <property type="generic name" value="Primidone"/>
</dbReference>
<dbReference type="DrugBank" id="DB00818">
    <property type="generic name" value="Propofol"/>
</dbReference>
<dbReference type="DrugBank" id="DB01589">
    <property type="generic name" value="Quazepam"/>
</dbReference>
<dbReference type="DrugBank" id="DB12404">
    <property type="generic name" value="Remimazolam"/>
</dbReference>
<dbReference type="DrugBank" id="DB01236">
    <property type="generic name" value="Sevoflurane"/>
</dbReference>
<dbReference type="DrugBank" id="DB09118">
    <property type="generic name" value="Stiripentol"/>
</dbReference>
<dbReference type="DrugBank" id="DB00306">
    <property type="generic name" value="Talbutal"/>
</dbReference>
<dbReference type="DrugBank" id="DB01956">
    <property type="generic name" value="Taurine"/>
</dbReference>
<dbReference type="DrugBank" id="DB00231">
    <property type="generic name" value="Temazepam"/>
</dbReference>
<dbReference type="DrugBank" id="DB11582">
    <property type="generic name" value="Thiocolchicoside"/>
</dbReference>
<dbReference type="DrugBank" id="DB00897">
    <property type="generic name" value="Triazolam"/>
</dbReference>
<dbReference type="DrugBank" id="DB15490">
    <property type="generic name" value="Zuranolone"/>
</dbReference>
<dbReference type="DrugCentral" id="Q9UN88"/>
<dbReference type="GlyCosmos" id="Q9UN88">
    <property type="glycosylation" value="1 site, No reported glycans"/>
</dbReference>
<dbReference type="GlyGen" id="Q9UN88">
    <property type="glycosylation" value="2 sites"/>
</dbReference>
<dbReference type="iPTMnet" id="Q9UN88"/>
<dbReference type="PhosphoSitePlus" id="Q9UN88"/>
<dbReference type="BioMuta" id="GABRQ"/>
<dbReference type="DMDM" id="13959382"/>
<dbReference type="jPOST" id="Q9UN88"/>
<dbReference type="MassIVE" id="Q9UN88"/>
<dbReference type="PaxDb" id="9606-ENSP00000469332"/>
<dbReference type="PeptideAtlas" id="Q9UN88"/>
<dbReference type="ProteomicsDB" id="85272"/>
<dbReference type="ABCD" id="Q9UN88">
    <property type="antibodies" value="2 sequenced antibodies"/>
</dbReference>
<dbReference type="Antibodypedia" id="73628">
    <property type="antibodies" value="101 antibodies from 20 providers"/>
</dbReference>
<dbReference type="DNASU" id="55879"/>
<dbReference type="Ensembl" id="ENST00000598523.3">
    <property type="protein sequence ID" value="ENSP00000469332.1"/>
    <property type="gene ID" value="ENSG00000268089.3"/>
</dbReference>
<dbReference type="GeneID" id="55879"/>
<dbReference type="KEGG" id="hsa:55879"/>
<dbReference type="MANE-Select" id="ENST00000598523.3">
    <property type="protein sequence ID" value="ENSP00000469332.1"/>
    <property type="RefSeq nucleotide sequence ID" value="NM_018558.4"/>
    <property type="RefSeq protein sequence ID" value="NP_061028.3"/>
</dbReference>
<dbReference type="UCSC" id="uc004ffp.2">
    <property type="organism name" value="human"/>
</dbReference>
<dbReference type="AGR" id="HGNC:14454"/>
<dbReference type="CTD" id="55879"/>
<dbReference type="DisGeNET" id="55879"/>
<dbReference type="GeneCards" id="GABRQ"/>
<dbReference type="HGNC" id="HGNC:14454">
    <property type="gene designation" value="GABRQ"/>
</dbReference>
<dbReference type="HPA" id="ENSG00000268089">
    <property type="expression patterns" value="Group enriched (brain, cervix)"/>
</dbReference>
<dbReference type="MalaCards" id="GABRQ"/>
<dbReference type="MIM" id="300349">
    <property type="type" value="gene"/>
</dbReference>
<dbReference type="neXtProt" id="NX_Q9UN88"/>
<dbReference type="OpenTargets" id="ENSG00000268089"/>
<dbReference type="PharmGKB" id="PA28504"/>
<dbReference type="VEuPathDB" id="HostDB:ENSG00000268089"/>
<dbReference type="eggNOG" id="KOG3643">
    <property type="taxonomic scope" value="Eukaryota"/>
</dbReference>
<dbReference type="GeneTree" id="ENSGT00940000162167"/>
<dbReference type="HOGENOM" id="CLU_010920_1_0_1"/>
<dbReference type="InParanoid" id="Q9UN88"/>
<dbReference type="OMA" id="IVLYWEG"/>
<dbReference type="OrthoDB" id="8890589at2759"/>
<dbReference type="PAN-GO" id="Q9UN88">
    <property type="GO annotations" value="13 GO annotations based on evolutionary models"/>
</dbReference>
<dbReference type="PhylomeDB" id="Q9UN88"/>
<dbReference type="TreeFam" id="TF315453"/>
<dbReference type="PathwayCommons" id="Q9UN88"/>
<dbReference type="Reactome" id="R-HSA-1236394">
    <property type="pathway name" value="Signaling by ERBB4"/>
</dbReference>
<dbReference type="Reactome" id="R-HSA-977443">
    <property type="pathway name" value="GABA receptor activation"/>
</dbReference>
<dbReference type="SignaLink" id="Q9UN88"/>
<dbReference type="BioGRID-ORCS" id="55879">
    <property type="hits" value="10 hits in 779 CRISPR screens"/>
</dbReference>
<dbReference type="GeneWiki" id="GABRQ"/>
<dbReference type="GenomeRNAi" id="55879"/>
<dbReference type="Pharos" id="Q9UN88">
    <property type="development level" value="Tclin"/>
</dbReference>
<dbReference type="PRO" id="PR:Q9UN88"/>
<dbReference type="Proteomes" id="UP000005640">
    <property type="component" value="Chromosome X"/>
</dbReference>
<dbReference type="RNAct" id="Q9UN88">
    <property type="molecule type" value="protein"/>
</dbReference>
<dbReference type="Bgee" id="ENSG00000268089">
    <property type="expression patterns" value="Expressed in hypothalamus and 62 other cell types or tissues"/>
</dbReference>
<dbReference type="GO" id="GO:0034707">
    <property type="term" value="C:chloride channel complex"/>
    <property type="evidence" value="ECO:0007669"/>
    <property type="project" value="UniProtKB-KW"/>
</dbReference>
<dbReference type="GO" id="GO:1902711">
    <property type="term" value="C:GABA-A receptor complex"/>
    <property type="evidence" value="ECO:0000318"/>
    <property type="project" value="GO_Central"/>
</dbReference>
<dbReference type="GO" id="GO:0005886">
    <property type="term" value="C:plasma membrane"/>
    <property type="evidence" value="ECO:0000304"/>
    <property type="project" value="Reactome"/>
</dbReference>
<dbReference type="GO" id="GO:0045211">
    <property type="term" value="C:postsynaptic membrane"/>
    <property type="evidence" value="ECO:0007669"/>
    <property type="project" value="UniProtKB-SubCell"/>
</dbReference>
<dbReference type="GO" id="GO:0043235">
    <property type="term" value="C:receptor complex"/>
    <property type="evidence" value="ECO:0000314"/>
    <property type="project" value="MGI"/>
</dbReference>
<dbReference type="GO" id="GO:0004890">
    <property type="term" value="F:GABA-A receptor activity"/>
    <property type="evidence" value="ECO:0000314"/>
    <property type="project" value="UniProtKB"/>
</dbReference>
<dbReference type="GO" id="GO:0022851">
    <property type="term" value="F:GABA-gated chloride ion channel activity"/>
    <property type="evidence" value="ECO:0000314"/>
    <property type="project" value="UniProtKB"/>
</dbReference>
<dbReference type="GO" id="GO:0005326">
    <property type="term" value="F:neurotransmitter transmembrane transporter activity"/>
    <property type="evidence" value="ECO:0000304"/>
    <property type="project" value="ProtInc"/>
</dbReference>
<dbReference type="GO" id="GO:0004888">
    <property type="term" value="F:transmembrane signaling receptor activity"/>
    <property type="evidence" value="ECO:0000304"/>
    <property type="project" value="ProtInc"/>
</dbReference>
<dbReference type="GO" id="GO:1902476">
    <property type="term" value="P:chloride transmembrane transport"/>
    <property type="evidence" value="ECO:0000318"/>
    <property type="project" value="GO_Central"/>
</dbReference>
<dbReference type="GO" id="GO:0007165">
    <property type="term" value="P:signal transduction"/>
    <property type="evidence" value="ECO:0000304"/>
    <property type="project" value="ProtInc"/>
</dbReference>
<dbReference type="CDD" id="cd19003">
    <property type="entry name" value="LGIC_ECD_GABAAR_theta"/>
    <property type="match status" value="1"/>
</dbReference>
<dbReference type="CDD" id="cd19056">
    <property type="entry name" value="LGIC_TM_GABAAR_theta"/>
    <property type="match status" value="1"/>
</dbReference>
<dbReference type="FunFam" id="1.20.58.390:FF:000054">
    <property type="entry name" value="Gamma-aminobutyric acid (GABA-A) receptor, subunit theta"/>
    <property type="match status" value="1"/>
</dbReference>
<dbReference type="FunFam" id="2.70.170.10:FF:000033">
    <property type="entry name" value="Gamma-aminobutyric acid (GABA-A) receptor, subunit theta"/>
    <property type="match status" value="1"/>
</dbReference>
<dbReference type="Gene3D" id="2.70.170.10">
    <property type="entry name" value="Neurotransmitter-gated ion-channel ligand-binding domain"/>
    <property type="match status" value="1"/>
</dbReference>
<dbReference type="Gene3D" id="1.20.58.390">
    <property type="entry name" value="Neurotransmitter-gated ion-channel transmembrane domain"/>
    <property type="match status" value="1"/>
</dbReference>
<dbReference type="InterPro" id="IPR006028">
    <property type="entry name" value="GABAA/Glycine_rcpt"/>
</dbReference>
<dbReference type="InterPro" id="IPR008101">
    <property type="entry name" value="GABAAt_rcpt"/>
</dbReference>
<dbReference type="InterPro" id="IPR006202">
    <property type="entry name" value="Neur_chan_lig-bd"/>
</dbReference>
<dbReference type="InterPro" id="IPR036734">
    <property type="entry name" value="Neur_chan_lig-bd_sf"/>
</dbReference>
<dbReference type="InterPro" id="IPR006201">
    <property type="entry name" value="Neur_channel"/>
</dbReference>
<dbReference type="InterPro" id="IPR036719">
    <property type="entry name" value="Neuro-gated_channel_TM_sf"/>
</dbReference>
<dbReference type="InterPro" id="IPR038050">
    <property type="entry name" value="Neuro_actylchol_rec"/>
</dbReference>
<dbReference type="InterPro" id="IPR006029">
    <property type="entry name" value="Neurotrans-gated_channel_TM"/>
</dbReference>
<dbReference type="InterPro" id="IPR018000">
    <property type="entry name" value="Neurotransmitter_ion_chnl_CS"/>
</dbReference>
<dbReference type="NCBIfam" id="TIGR00860">
    <property type="entry name" value="LIC"/>
    <property type="match status" value="1"/>
</dbReference>
<dbReference type="PANTHER" id="PTHR18945">
    <property type="entry name" value="NEUROTRANSMITTER GATED ION CHANNEL"/>
    <property type="match status" value="1"/>
</dbReference>
<dbReference type="Pfam" id="PF02931">
    <property type="entry name" value="Neur_chan_LBD"/>
    <property type="match status" value="1"/>
</dbReference>
<dbReference type="Pfam" id="PF02932">
    <property type="entry name" value="Neur_chan_memb"/>
    <property type="match status" value="1"/>
</dbReference>
<dbReference type="PRINTS" id="PR00253">
    <property type="entry name" value="GABAARECEPTR"/>
</dbReference>
<dbReference type="PRINTS" id="PR01725">
    <property type="entry name" value="GABAARTHETA"/>
</dbReference>
<dbReference type="PRINTS" id="PR00252">
    <property type="entry name" value="NRIONCHANNEL"/>
</dbReference>
<dbReference type="SUPFAM" id="SSF90112">
    <property type="entry name" value="Neurotransmitter-gated ion-channel transmembrane pore"/>
    <property type="match status" value="1"/>
</dbReference>
<dbReference type="SUPFAM" id="SSF63712">
    <property type="entry name" value="Nicotinic receptor ligand binding domain-like"/>
    <property type="match status" value="1"/>
</dbReference>
<dbReference type="PROSITE" id="PS00236">
    <property type="entry name" value="NEUROTR_ION_CHANNEL"/>
    <property type="match status" value="1"/>
</dbReference>
<evidence type="ECO:0000250" key="1">
    <source>
        <dbReference type="UniProtKB" id="P18507"/>
    </source>
</evidence>
<evidence type="ECO:0000250" key="2">
    <source>
        <dbReference type="UniProtKB" id="P28472"/>
    </source>
</evidence>
<evidence type="ECO:0000250" key="3">
    <source>
        <dbReference type="UniProtKB" id="P47870"/>
    </source>
</evidence>
<evidence type="ECO:0000255" key="4"/>
<evidence type="ECO:0000256" key="5">
    <source>
        <dbReference type="SAM" id="MobiDB-lite"/>
    </source>
</evidence>
<evidence type="ECO:0000269" key="6">
    <source>
    </source>
</evidence>
<evidence type="ECO:0000269" key="7">
    <source>
    </source>
</evidence>
<evidence type="ECO:0000269" key="8">
    <source>
    </source>
</evidence>
<evidence type="ECO:0000269" key="9">
    <source ref="3"/>
</evidence>
<evidence type="ECO:0000303" key="10">
    <source>
    </source>
</evidence>
<evidence type="ECO:0000305" key="11"/>
<evidence type="ECO:0000312" key="12">
    <source>
        <dbReference type="HGNC" id="HGNC:14454"/>
    </source>
</evidence>
<gene>
    <name evidence="12" type="primary">GABRQ</name>
</gene>
<sequence>MGIRGMLRAAVILLLIRTWLAEGNYPSPIPKFHFEFSSAVPEVVLNLFNCKNCANEAVVQKILDRVLSRYDVRLRPNFGGAPVPVRISIYVTSIEQISEMNMDYTITMFFHQTWKDSRLAYYETTLNLTLDYRMHEKLWVPDCYFLNSKDAFVHDVTVENRVFQLHPDGTVRYGIRLTTTAACSLDLHKFPMDKQACNLVVESYGYTVEDIILFWDDNGNAIHMTEELHIPQFTFLGRTITSKEVYFYTGSYIRLILKFQVQREVNSYLVQVYWPTVLTTITSWISFWMNYDSSAARVTIGLTSMLILTTIDSHLRDKLPNISCIKAIDIYILVCLFFVFLSLLEYVYINYLFYSRGPRRQPRRHRRPRRVIARYRYQQVVVGNVQDGLINVEDGVSSLPITPAQAPLASPESLGSLTSTSEQAQLATSESLSPLTSLSGQAPLATGESLSDLPSTSEQARHSYGVRFNGFQADDSIIPTEIRNRVEAHGHGVTHDHEDSNESLSSDERHGHGPSGKPMLHHGEKGVQEAGWDLDDNNDKSDCLAIKEQFKCDTNSTWGLNDDELMAHGQEKDSSSESEDSCPPSPGCSFTEGFSFDLFNPDYVPKVDKWSRFLFPLAFGLFNIVYWVYHMY</sequence>
<reference key="1">
    <citation type="journal article" date="2000" name="J. Neurosci.">
        <title>GABAA receptor epsilon and theta subunits display unusual structural variation between species and are enriched in the rat locus ceruleus.</title>
        <authorList>
            <person name="Sinkkonen S.T."/>
            <person name="Hanna M.C."/>
            <person name="Kirkness E.F."/>
            <person name="Korpi E.R."/>
        </authorList>
    </citation>
    <scope>NUCLEOTIDE SEQUENCE [MRNA]</scope>
    <scope>TISSUE SPECIFICITY</scope>
</reference>
<reference key="2">
    <citation type="journal article" date="2005" name="Nature">
        <title>The DNA sequence of the human X chromosome.</title>
        <authorList>
            <person name="Ross M.T."/>
            <person name="Grafham D.V."/>
            <person name="Coffey A.J."/>
            <person name="Scherer S."/>
            <person name="McLay K."/>
            <person name="Muzny D."/>
            <person name="Platzer M."/>
            <person name="Howell G.R."/>
            <person name="Burrows C."/>
            <person name="Bird C.P."/>
            <person name="Frankish A."/>
            <person name="Lovell F.L."/>
            <person name="Howe K.L."/>
            <person name="Ashurst J.L."/>
            <person name="Fulton R.S."/>
            <person name="Sudbrak R."/>
            <person name="Wen G."/>
            <person name="Jones M.C."/>
            <person name="Hurles M.E."/>
            <person name="Andrews T.D."/>
            <person name="Scott C.E."/>
            <person name="Searle S."/>
            <person name="Ramser J."/>
            <person name="Whittaker A."/>
            <person name="Deadman R."/>
            <person name="Carter N.P."/>
            <person name="Hunt S.E."/>
            <person name="Chen R."/>
            <person name="Cree A."/>
            <person name="Gunaratne P."/>
            <person name="Havlak P."/>
            <person name="Hodgson A."/>
            <person name="Metzker M.L."/>
            <person name="Richards S."/>
            <person name="Scott G."/>
            <person name="Steffen D."/>
            <person name="Sodergren E."/>
            <person name="Wheeler D.A."/>
            <person name="Worley K.C."/>
            <person name="Ainscough R."/>
            <person name="Ambrose K.D."/>
            <person name="Ansari-Lari M.A."/>
            <person name="Aradhya S."/>
            <person name="Ashwell R.I."/>
            <person name="Babbage A.K."/>
            <person name="Bagguley C.L."/>
            <person name="Ballabio A."/>
            <person name="Banerjee R."/>
            <person name="Barker G.E."/>
            <person name="Barlow K.F."/>
            <person name="Barrett I.P."/>
            <person name="Bates K.N."/>
            <person name="Beare D.M."/>
            <person name="Beasley H."/>
            <person name="Beasley O."/>
            <person name="Beck A."/>
            <person name="Bethel G."/>
            <person name="Blechschmidt K."/>
            <person name="Brady N."/>
            <person name="Bray-Allen S."/>
            <person name="Bridgeman A.M."/>
            <person name="Brown A.J."/>
            <person name="Brown M.J."/>
            <person name="Bonnin D."/>
            <person name="Bruford E.A."/>
            <person name="Buhay C."/>
            <person name="Burch P."/>
            <person name="Burford D."/>
            <person name="Burgess J."/>
            <person name="Burrill W."/>
            <person name="Burton J."/>
            <person name="Bye J.M."/>
            <person name="Carder C."/>
            <person name="Carrel L."/>
            <person name="Chako J."/>
            <person name="Chapman J.C."/>
            <person name="Chavez D."/>
            <person name="Chen E."/>
            <person name="Chen G."/>
            <person name="Chen Y."/>
            <person name="Chen Z."/>
            <person name="Chinault C."/>
            <person name="Ciccodicola A."/>
            <person name="Clark S.Y."/>
            <person name="Clarke G."/>
            <person name="Clee C.M."/>
            <person name="Clegg S."/>
            <person name="Clerc-Blankenburg K."/>
            <person name="Clifford K."/>
            <person name="Cobley V."/>
            <person name="Cole C.G."/>
            <person name="Conquer J.S."/>
            <person name="Corby N."/>
            <person name="Connor R.E."/>
            <person name="David R."/>
            <person name="Davies J."/>
            <person name="Davis C."/>
            <person name="Davis J."/>
            <person name="Delgado O."/>
            <person name="Deshazo D."/>
            <person name="Dhami P."/>
            <person name="Ding Y."/>
            <person name="Dinh H."/>
            <person name="Dodsworth S."/>
            <person name="Draper H."/>
            <person name="Dugan-Rocha S."/>
            <person name="Dunham A."/>
            <person name="Dunn M."/>
            <person name="Durbin K.J."/>
            <person name="Dutta I."/>
            <person name="Eades T."/>
            <person name="Ellwood M."/>
            <person name="Emery-Cohen A."/>
            <person name="Errington H."/>
            <person name="Evans K.L."/>
            <person name="Faulkner L."/>
            <person name="Francis F."/>
            <person name="Frankland J."/>
            <person name="Fraser A.E."/>
            <person name="Galgoczy P."/>
            <person name="Gilbert J."/>
            <person name="Gill R."/>
            <person name="Gloeckner G."/>
            <person name="Gregory S.G."/>
            <person name="Gribble S."/>
            <person name="Griffiths C."/>
            <person name="Grocock R."/>
            <person name="Gu Y."/>
            <person name="Gwilliam R."/>
            <person name="Hamilton C."/>
            <person name="Hart E.A."/>
            <person name="Hawes A."/>
            <person name="Heath P.D."/>
            <person name="Heitmann K."/>
            <person name="Hennig S."/>
            <person name="Hernandez J."/>
            <person name="Hinzmann B."/>
            <person name="Ho S."/>
            <person name="Hoffs M."/>
            <person name="Howden P.J."/>
            <person name="Huckle E.J."/>
            <person name="Hume J."/>
            <person name="Hunt P.J."/>
            <person name="Hunt A.R."/>
            <person name="Isherwood J."/>
            <person name="Jacob L."/>
            <person name="Johnson D."/>
            <person name="Jones S."/>
            <person name="de Jong P.J."/>
            <person name="Joseph S.S."/>
            <person name="Keenan S."/>
            <person name="Kelly S."/>
            <person name="Kershaw J.K."/>
            <person name="Khan Z."/>
            <person name="Kioschis P."/>
            <person name="Klages S."/>
            <person name="Knights A.J."/>
            <person name="Kosiura A."/>
            <person name="Kovar-Smith C."/>
            <person name="Laird G.K."/>
            <person name="Langford C."/>
            <person name="Lawlor S."/>
            <person name="Leversha M."/>
            <person name="Lewis L."/>
            <person name="Liu W."/>
            <person name="Lloyd C."/>
            <person name="Lloyd D.M."/>
            <person name="Loulseged H."/>
            <person name="Loveland J.E."/>
            <person name="Lovell J.D."/>
            <person name="Lozado R."/>
            <person name="Lu J."/>
            <person name="Lyne R."/>
            <person name="Ma J."/>
            <person name="Maheshwari M."/>
            <person name="Matthews L.H."/>
            <person name="McDowall J."/>
            <person name="McLaren S."/>
            <person name="McMurray A."/>
            <person name="Meidl P."/>
            <person name="Meitinger T."/>
            <person name="Milne S."/>
            <person name="Miner G."/>
            <person name="Mistry S.L."/>
            <person name="Morgan M."/>
            <person name="Morris S."/>
            <person name="Mueller I."/>
            <person name="Mullikin J.C."/>
            <person name="Nguyen N."/>
            <person name="Nordsiek G."/>
            <person name="Nyakatura G."/>
            <person name="O'dell C.N."/>
            <person name="Okwuonu G."/>
            <person name="Palmer S."/>
            <person name="Pandian R."/>
            <person name="Parker D."/>
            <person name="Parrish J."/>
            <person name="Pasternak S."/>
            <person name="Patel D."/>
            <person name="Pearce A.V."/>
            <person name="Pearson D.M."/>
            <person name="Pelan S.E."/>
            <person name="Perez L."/>
            <person name="Porter K.M."/>
            <person name="Ramsey Y."/>
            <person name="Reichwald K."/>
            <person name="Rhodes S."/>
            <person name="Ridler K.A."/>
            <person name="Schlessinger D."/>
            <person name="Schueler M.G."/>
            <person name="Sehra H.K."/>
            <person name="Shaw-Smith C."/>
            <person name="Shen H."/>
            <person name="Sheridan E.M."/>
            <person name="Shownkeen R."/>
            <person name="Skuce C.D."/>
            <person name="Smith M.L."/>
            <person name="Sotheran E.C."/>
            <person name="Steingruber H.E."/>
            <person name="Steward C.A."/>
            <person name="Storey R."/>
            <person name="Swann R.M."/>
            <person name="Swarbreck D."/>
            <person name="Tabor P.E."/>
            <person name="Taudien S."/>
            <person name="Taylor T."/>
            <person name="Teague B."/>
            <person name="Thomas K."/>
            <person name="Thorpe A."/>
            <person name="Timms K."/>
            <person name="Tracey A."/>
            <person name="Trevanion S."/>
            <person name="Tromans A.C."/>
            <person name="d'Urso M."/>
            <person name="Verduzco D."/>
            <person name="Villasana D."/>
            <person name="Waldron L."/>
            <person name="Wall M."/>
            <person name="Wang Q."/>
            <person name="Warren J."/>
            <person name="Warry G.L."/>
            <person name="Wei X."/>
            <person name="West A."/>
            <person name="Whitehead S.L."/>
            <person name="Whiteley M.N."/>
            <person name="Wilkinson J.E."/>
            <person name="Willey D.L."/>
            <person name="Williams G."/>
            <person name="Williams L."/>
            <person name="Williamson A."/>
            <person name="Williamson H."/>
            <person name="Wilming L."/>
            <person name="Woodmansey R.L."/>
            <person name="Wray P.W."/>
            <person name="Yen J."/>
            <person name="Zhang J."/>
            <person name="Zhou J."/>
            <person name="Zoghbi H."/>
            <person name="Zorilla S."/>
            <person name="Buck D."/>
            <person name="Reinhardt R."/>
            <person name="Poustka A."/>
            <person name="Rosenthal A."/>
            <person name="Lehrach H."/>
            <person name="Meindl A."/>
            <person name="Minx P.J."/>
            <person name="Hillier L.W."/>
            <person name="Willard H.F."/>
            <person name="Wilson R.K."/>
            <person name="Waterston R.H."/>
            <person name="Rice C.M."/>
            <person name="Vaudin M."/>
            <person name="Coulson A."/>
            <person name="Nelson D.L."/>
            <person name="Weinstock G."/>
            <person name="Sulston J.E."/>
            <person name="Durbin R.M."/>
            <person name="Hubbard T."/>
            <person name="Gibbs R.A."/>
            <person name="Beck S."/>
            <person name="Rogers J."/>
            <person name="Bentley D.R."/>
        </authorList>
    </citation>
    <scope>NUCLEOTIDE SEQUENCE [LARGE SCALE GENOMIC DNA]</scope>
</reference>
<reference key="3">
    <citation type="submission" date="2005-07" db="EMBL/GenBank/DDBJ databases">
        <authorList>
            <person name="Mural R.J."/>
            <person name="Istrail S."/>
            <person name="Sutton G.G."/>
            <person name="Florea L."/>
            <person name="Halpern A.L."/>
            <person name="Mobarry C.M."/>
            <person name="Lippert R."/>
            <person name="Walenz B."/>
            <person name="Shatkay H."/>
            <person name="Dew I."/>
            <person name="Miller J.R."/>
            <person name="Flanigan M.J."/>
            <person name="Edwards N.J."/>
            <person name="Bolanos R."/>
            <person name="Fasulo D."/>
            <person name="Halldorsson B.V."/>
            <person name="Hannenhalli S."/>
            <person name="Turner R."/>
            <person name="Yooseph S."/>
            <person name="Lu F."/>
            <person name="Nusskern D.R."/>
            <person name="Shue B.C."/>
            <person name="Zheng X.H."/>
            <person name="Zhong F."/>
            <person name="Delcher A.L."/>
            <person name="Huson D.H."/>
            <person name="Kravitz S.A."/>
            <person name="Mouchard L."/>
            <person name="Reinert K."/>
            <person name="Remington K.A."/>
            <person name="Clark A.G."/>
            <person name="Waterman M.S."/>
            <person name="Eichler E.E."/>
            <person name="Adams M.D."/>
            <person name="Hunkapiller M.W."/>
            <person name="Myers E.W."/>
            <person name="Venter J.C."/>
        </authorList>
    </citation>
    <scope>NUCLEOTIDE SEQUENCE [LARGE SCALE GENOMIC DNA]</scope>
    <scope>VARIANT PHE-478</scope>
</reference>
<reference key="4">
    <citation type="journal article" date="2004" name="Genome Res.">
        <title>The status, quality, and expansion of the NIH full-length cDNA project: the Mammalian Gene Collection (MGC).</title>
        <authorList>
            <consortium name="The MGC Project Team"/>
        </authorList>
    </citation>
    <scope>NUCLEOTIDE SEQUENCE [LARGE SCALE MRNA]</scope>
</reference>
<reference key="5">
    <citation type="journal article" date="1999" name="Proc. Natl. Acad. Sci. U.S.A.">
        <title>Theta, a novel gamma-aminobutyric acid type A receptor subunit.</title>
        <authorList>
            <person name="Bonnert T.P."/>
            <person name="McKernan R.M."/>
            <person name="Farrar S."/>
            <person name="le Bourdelles B."/>
            <person name="Heavens R.P."/>
            <person name="Smith D.W."/>
            <person name="Hewson L."/>
            <person name="Rigby M.R."/>
            <person name="Sirinathsinghji D.J.S."/>
            <person name="Brown N."/>
            <person name="Wafford K.A."/>
            <person name="Whiting P.J."/>
        </authorList>
    </citation>
    <scope>NUCLEOTIDE SEQUENCE [MRNA] OF 6-632</scope>
    <scope>VARIANT PHE-478</scope>
    <scope>FUNCTION</scope>
    <scope>INTERACTION WITH GABRA2; GABRB1 AND GABRG1</scope>
    <scope>TISSUE SPECIFICITY</scope>
</reference>
<reference key="6">
    <citation type="journal article" date="2006" name="BMC Pharmacol.">
        <title>Impact of epsilon and theta subunits on pharmacological properties of alpha3beta1 GABAA receptors expressed in Xenopus oocytes.</title>
        <authorList>
            <person name="Ranna M."/>
            <person name="Sinkkonen S.T."/>
            <person name="Moeykkynen T."/>
            <person name="Uusi-Oukari M."/>
            <person name="Korpi E.R."/>
        </authorList>
    </citation>
    <scope>FUNCTION</scope>
    <scope>TRANSPORTER ACTIVITY</scope>
    <scope>ACTIVITY REGULATION</scope>
    <scope>INTERACTION WITH GABRA3; GABRB1 AND GABRE</scope>
</reference>
<proteinExistence type="evidence at protein level"/>
<keyword id="KW-1003">Cell membrane</keyword>
<keyword id="KW-0868">Chloride</keyword>
<keyword id="KW-0869">Chloride channel</keyword>
<keyword id="KW-1015">Disulfide bond</keyword>
<keyword id="KW-0325">Glycoprotein</keyword>
<keyword id="KW-0407">Ion channel</keyword>
<keyword id="KW-0406">Ion transport</keyword>
<keyword id="KW-0472">Membrane</keyword>
<keyword id="KW-0628">Postsynaptic cell membrane</keyword>
<keyword id="KW-1267">Proteomics identification</keyword>
<keyword id="KW-1185">Reference proteome</keyword>
<keyword id="KW-0732">Signal</keyword>
<keyword id="KW-0770">Synapse</keyword>
<keyword id="KW-0812">Transmembrane</keyword>
<keyword id="KW-1133">Transmembrane helix</keyword>
<keyword id="KW-0813">Transport</keyword>
<protein>
    <recommendedName>
        <fullName>Gamma-aminobutyric acid receptor subunit theta</fullName>
    </recommendedName>
    <alternativeName>
        <fullName evidence="10">GABA(A) receptor subunit theta</fullName>
        <shortName>GABAAR subunit theta</shortName>
    </alternativeName>
</protein>
<name>GBRT_HUMAN</name>
<comment type="function">
    <text evidence="3 6 8">Theta subunit of the heteropentameric ligand-gated chloride channel gated by gamma-aminobutyric acid (GABA), a major inhibitory neurotransmitter in the brain (PubMed:10449790, PubMed:16412217). GABA-gated chloride channels, also named GABA(A) receptors (GABAAR), consist of five subunits arranged around a central pore and contain GABA active binding site(s) located at the alpha and beta subunit interfaces (By similarity). When activated by GABA, GABAARs selectively allow the flow of chloride anions across the cell membrane down their electrochemical gradient (PubMed:10449790, PubMed:16412217).</text>
</comment>
<comment type="catalytic activity">
    <reaction evidence="6 8">
        <text>chloride(in) = chloride(out)</text>
        <dbReference type="Rhea" id="RHEA:29823"/>
        <dbReference type="ChEBI" id="CHEBI:17996"/>
    </reaction>
</comment>
<comment type="activity regulation">
    <text evidence="8">Potentiated by etomidate, propofol, pregnanolone and pentobarbital.</text>
</comment>
<comment type="subunit">
    <text evidence="6 8">Heteropentamer, formed by a combination of alpha (GABRA1-6), beta (GABRB1-3), gamma (GABRG1-3), delta (GABRD), epsilon (GABRE), rho (GABRR1-3), pi (GABRP) and theta (GABRQ) chains, each subunit exhibiting distinct physiological and pharmacological properties.</text>
</comment>
<comment type="interaction">
    <interactant intactId="EBI-12820585">
        <id>Q9UN88</id>
    </interactant>
    <interactant intactId="EBI-744239">
        <id>Q14749</id>
        <label>GNMT</label>
    </interactant>
    <organismsDiffer>false</organismsDiffer>
    <experiments>3</experiments>
</comment>
<comment type="subcellular location">
    <subcellularLocation>
        <location>Postsynaptic cell membrane</location>
        <topology evidence="4">Multi-pass membrane protein</topology>
    </subcellularLocation>
    <subcellularLocation>
        <location>Cell membrane</location>
        <topology evidence="4">Multi-pass membrane protein</topology>
    </subcellularLocation>
</comment>
<comment type="tissue specificity">
    <text evidence="6 7">Expressed in brain.</text>
</comment>
<comment type="domain">
    <text evidence="1">GABAARs subunits share a common topological structure: a peptide sequence made up of a long extracellular N-terminal, four transmembrane domains, intracellular or cytoplasmic domain located between the third and the fourth transmembrane domains.</text>
</comment>
<comment type="similarity">
    <text evidence="11">Belongs to the ligand-gated ion channel (TC 1.A.9) family. Gamma-aminobutyric acid receptor (TC 1.A.9.5) subfamily. GABRQ sub-subfamily.</text>
</comment>
<organism>
    <name type="scientific">Homo sapiens</name>
    <name type="common">Human</name>
    <dbReference type="NCBI Taxonomy" id="9606"/>
    <lineage>
        <taxon>Eukaryota</taxon>
        <taxon>Metazoa</taxon>
        <taxon>Chordata</taxon>
        <taxon>Craniata</taxon>
        <taxon>Vertebrata</taxon>
        <taxon>Euteleostomi</taxon>
        <taxon>Mammalia</taxon>
        <taxon>Eutheria</taxon>
        <taxon>Euarchontoglires</taxon>
        <taxon>Primates</taxon>
        <taxon>Haplorrhini</taxon>
        <taxon>Catarrhini</taxon>
        <taxon>Hominidae</taxon>
        <taxon>Homo</taxon>
    </lineage>
</organism>